<dbReference type="EC" id="2.8.1.7" evidence="1"/>
<dbReference type="EMBL" id="CP000247">
    <property type="protein sequence ID" value="ABG70524.1"/>
    <property type="molecule type" value="Genomic_DNA"/>
</dbReference>
<dbReference type="RefSeq" id="WP_001295373.1">
    <property type="nucleotide sequence ID" value="NC_008253.1"/>
</dbReference>
<dbReference type="SMR" id="Q0TEV5"/>
<dbReference type="GeneID" id="93774606"/>
<dbReference type="KEGG" id="ecp:ECP_2535"/>
<dbReference type="HOGENOM" id="CLU_003433_0_2_6"/>
<dbReference type="UniPathway" id="UPA00266"/>
<dbReference type="Proteomes" id="UP000009182">
    <property type="component" value="Chromosome"/>
</dbReference>
<dbReference type="GO" id="GO:1990221">
    <property type="term" value="C:L-cysteine desulfurase complex"/>
    <property type="evidence" value="ECO:0007669"/>
    <property type="project" value="UniProtKB-ARBA"/>
</dbReference>
<dbReference type="GO" id="GO:0051537">
    <property type="term" value="F:2 iron, 2 sulfur cluster binding"/>
    <property type="evidence" value="ECO:0007669"/>
    <property type="project" value="UniProtKB-UniRule"/>
</dbReference>
<dbReference type="GO" id="GO:0031071">
    <property type="term" value="F:cysteine desulfurase activity"/>
    <property type="evidence" value="ECO:0007669"/>
    <property type="project" value="UniProtKB-UniRule"/>
</dbReference>
<dbReference type="GO" id="GO:0046872">
    <property type="term" value="F:metal ion binding"/>
    <property type="evidence" value="ECO:0007669"/>
    <property type="project" value="UniProtKB-KW"/>
</dbReference>
<dbReference type="GO" id="GO:0030170">
    <property type="term" value="F:pyridoxal phosphate binding"/>
    <property type="evidence" value="ECO:0007669"/>
    <property type="project" value="UniProtKB-UniRule"/>
</dbReference>
<dbReference type="GO" id="GO:0044571">
    <property type="term" value="P:[2Fe-2S] cluster assembly"/>
    <property type="evidence" value="ECO:0007669"/>
    <property type="project" value="UniProtKB-UniRule"/>
</dbReference>
<dbReference type="FunFam" id="3.40.640.10:FF:000003">
    <property type="entry name" value="Cysteine desulfurase IscS"/>
    <property type="match status" value="1"/>
</dbReference>
<dbReference type="FunFam" id="3.90.1150.10:FF:000002">
    <property type="entry name" value="Cysteine desulfurase IscS"/>
    <property type="match status" value="1"/>
</dbReference>
<dbReference type="Gene3D" id="3.90.1150.10">
    <property type="entry name" value="Aspartate Aminotransferase, domain 1"/>
    <property type="match status" value="1"/>
</dbReference>
<dbReference type="Gene3D" id="3.40.640.10">
    <property type="entry name" value="Type I PLP-dependent aspartate aminotransferase-like (Major domain)"/>
    <property type="match status" value="1"/>
</dbReference>
<dbReference type="HAMAP" id="MF_00331">
    <property type="entry name" value="Cys_desulf_IscS"/>
    <property type="match status" value="1"/>
</dbReference>
<dbReference type="InterPro" id="IPR000192">
    <property type="entry name" value="Aminotrans_V_dom"/>
</dbReference>
<dbReference type="InterPro" id="IPR020578">
    <property type="entry name" value="Aminotrans_V_PyrdxlP_BS"/>
</dbReference>
<dbReference type="InterPro" id="IPR010240">
    <property type="entry name" value="Cys_deSase_IscS"/>
</dbReference>
<dbReference type="InterPro" id="IPR016454">
    <property type="entry name" value="Cysteine_dSase"/>
</dbReference>
<dbReference type="InterPro" id="IPR015424">
    <property type="entry name" value="PyrdxlP-dep_Trfase"/>
</dbReference>
<dbReference type="InterPro" id="IPR015421">
    <property type="entry name" value="PyrdxlP-dep_Trfase_major"/>
</dbReference>
<dbReference type="InterPro" id="IPR015422">
    <property type="entry name" value="PyrdxlP-dep_Trfase_small"/>
</dbReference>
<dbReference type="NCBIfam" id="TIGR02006">
    <property type="entry name" value="IscS"/>
    <property type="match status" value="1"/>
</dbReference>
<dbReference type="NCBIfam" id="NF002806">
    <property type="entry name" value="PRK02948.1"/>
    <property type="match status" value="1"/>
</dbReference>
<dbReference type="NCBIfam" id="NF010611">
    <property type="entry name" value="PRK14012.1"/>
    <property type="match status" value="1"/>
</dbReference>
<dbReference type="PANTHER" id="PTHR11601:SF34">
    <property type="entry name" value="CYSTEINE DESULFURASE"/>
    <property type="match status" value="1"/>
</dbReference>
<dbReference type="PANTHER" id="PTHR11601">
    <property type="entry name" value="CYSTEINE DESULFURYLASE FAMILY MEMBER"/>
    <property type="match status" value="1"/>
</dbReference>
<dbReference type="Pfam" id="PF00266">
    <property type="entry name" value="Aminotran_5"/>
    <property type="match status" value="1"/>
</dbReference>
<dbReference type="PIRSF" id="PIRSF005572">
    <property type="entry name" value="NifS"/>
    <property type="match status" value="1"/>
</dbReference>
<dbReference type="SUPFAM" id="SSF53383">
    <property type="entry name" value="PLP-dependent transferases"/>
    <property type="match status" value="1"/>
</dbReference>
<dbReference type="PROSITE" id="PS00595">
    <property type="entry name" value="AA_TRANSFER_CLASS_5"/>
    <property type="match status" value="1"/>
</dbReference>
<keyword id="KW-0001">2Fe-2S</keyword>
<keyword id="KW-0963">Cytoplasm</keyword>
<keyword id="KW-0408">Iron</keyword>
<keyword id="KW-0411">Iron-sulfur</keyword>
<keyword id="KW-0479">Metal-binding</keyword>
<keyword id="KW-0663">Pyridoxal phosphate</keyword>
<keyword id="KW-0808">Transferase</keyword>
<sequence length="404" mass="45090">MKLPIYLDYSATTPVDPRVAEKMMQFMTMDGTFGNPASRSHRFGWQAEEAVDIARNQIADLVGADPREIVFTSGATESDNLAIKGAANFYQKKGKHIITSKTEHKAVLDTCRQLEREGFEVTYLAPQRNGIIDLKELEAAMRDDTILVSIMHVNNEIGVVQDIAAIGEMCRARGIIYHVDATQSVGKLPIDLSQLKVDLMSFSGHKIYGPKGIGALYVRRKPRVRIEAQMHGGGHERGMRSGTLPVHQIVGMGEAYRIAKEEMATEMERLRGLRNRLWNGIKDIEEVYLNGDLEHGAPNILNVSFNYVEGESLIMALKDLAVSSGSACTSASLEPSYVLRALGLNDELAHSSIRFSLGRFTTEEEIDYTIELVRKSIGRLRDLSPLWEMYKQGVDLNSIEWAHH</sequence>
<proteinExistence type="inferred from homology"/>
<protein>
    <recommendedName>
        <fullName evidence="1">Cysteine desulfurase IscS</fullName>
        <ecNumber evidence="1">2.8.1.7</ecNumber>
    </recommendedName>
</protein>
<gene>
    <name evidence="1" type="primary">iscS</name>
    <name type="ordered locus">ECP_2535</name>
</gene>
<organism>
    <name type="scientific">Escherichia coli O6:K15:H31 (strain 536 / UPEC)</name>
    <dbReference type="NCBI Taxonomy" id="362663"/>
    <lineage>
        <taxon>Bacteria</taxon>
        <taxon>Pseudomonadati</taxon>
        <taxon>Pseudomonadota</taxon>
        <taxon>Gammaproteobacteria</taxon>
        <taxon>Enterobacterales</taxon>
        <taxon>Enterobacteriaceae</taxon>
        <taxon>Escherichia</taxon>
    </lineage>
</organism>
<name>ISCS_ECOL5</name>
<comment type="function">
    <text evidence="1">Master enzyme that delivers sulfur to a number of partners involved in Fe-S cluster assembly, tRNA modification or cofactor biosynthesis. Catalyzes the removal of elemental sulfur and selenium atoms from cysteine and selenocysteine to produce alanine. Functions as a sulfur delivery protein for Fe-S cluster synthesis onto IscU, an Fe-S scaffold assembly protein, as well as other S acceptor proteins. Also functions as a selenium delivery protein in the pathway for the biosynthesis of selenophosphate.</text>
</comment>
<comment type="catalytic activity">
    <reaction evidence="1">
        <text>(sulfur carrier)-H + L-cysteine = (sulfur carrier)-SH + L-alanine</text>
        <dbReference type="Rhea" id="RHEA:43892"/>
        <dbReference type="Rhea" id="RHEA-COMP:14737"/>
        <dbReference type="Rhea" id="RHEA-COMP:14739"/>
        <dbReference type="ChEBI" id="CHEBI:29917"/>
        <dbReference type="ChEBI" id="CHEBI:35235"/>
        <dbReference type="ChEBI" id="CHEBI:57972"/>
        <dbReference type="ChEBI" id="CHEBI:64428"/>
        <dbReference type="EC" id="2.8.1.7"/>
    </reaction>
</comment>
<comment type="cofactor">
    <cofactor evidence="1">
        <name>pyridoxal 5'-phosphate</name>
        <dbReference type="ChEBI" id="CHEBI:597326"/>
    </cofactor>
</comment>
<comment type="pathway">
    <text evidence="1">Cofactor biosynthesis; iron-sulfur cluster biosynthesis.</text>
</comment>
<comment type="subunit">
    <text evidence="1">Homodimer. Forms a heterotetramer with IscU, interacts with other sulfur acceptors.</text>
</comment>
<comment type="subcellular location">
    <subcellularLocation>
        <location evidence="1">Cytoplasm</location>
    </subcellularLocation>
</comment>
<comment type="similarity">
    <text evidence="1">Belongs to the class-V pyridoxal-phosphate-dependent aminotransferase family. NifS/IscS subfamily.</text>
</comment>
<evidence type="ECO:0000255" key="1">
    <source>
        <dbReference type="HAMAP-Rule" id="MF_00331"/>
    </source>
</evidence>
<feature type="chain" id="PRO_1000019407" description="Cysteine desulfurase IscS">
    <location>
        <begin position="1"/>
        <end position="404"/>
    </location>
</feature>
<feature type="active site" description="Cysteine persulfide intermediate" evidence="1">
    <location>
        <position position="328"/>
    </location>
</feature>
<feature type="binding site" evidence="1">
    <location>
        <begin position="75"/>
        <end position="76"/>
    </location>
    <ligand>
        <name>pyridoxal 5'-phosphate</name>
        <dbReference type="ChEBI" id="CHEBI:597326"/>
    </ligand>
</feature>
<feature type="binding site" evidence="1">
    <location>
        <position position="155"/>
    </location>
    <ligand>
        <name>pyridoxal 5'-phosphate</name>
        <dbReference type="ChEBI" id="CHEBI:597326"/>
    </ligand>
</feature>
<feature type="binding site" evidence="1">
    <location>
        <position position="183"/>
    </location>
    <ligand>
        <name>pyridoxal 5'-phosphate</name>
        <dbReference type="ChEBI" id="CHEBI:597326"/>
    </ligand>
</feature>
<feature type="binding site" evidence="1">
    <location>
        <begin position="203"/>
        <end position="205"/>
    </location>
    <ligand>
        <name>pyridoxal 5'-phosphate</name>
        <dbReference type="ChEBI" id="CHEBI:597326"/>
    </ligand>
</feature>
<feature type="binding site" evidence="1">
    <location>
        <position position="243"/>
    </location>
    <ligand>
        <name>pyridoxal 5'-phosphate</name>
        <dbReference type="ChEBI" id="CHEBI:597326"/>
    </ligand>
</feature>
<feature type="binding site" description="via persulfide group" evidence="1">
    <location>
        <position position="328"/>
    </location>
    <ligand>
        <name>[2Fe-2S] cluster</name>
        <dbReference type="ChEBI" id="CHEBI:190135"/>
        <note>ligand shared with IscU</note>
    </ligand>
</feature>
<feature type="modified residue" description="N6-(pyridoxal phosphate)lysine" evidence="1">
    <location>
        <position position="206"/>
    </location>
</feature>
<reference key="1">
    <citation type="journal article" date="2006" name="Mol. Microbiol.">
        <title>Role of pathogenicity island-associated integrases in the genome plasticity of uropathogenic Escherichia coli strain 536.</title>
        <authorList>
            <person name="Hochhut B."/>
            <person name="Wilde C."/>
            <person name="Balling G."/>
            <person name="Middendorf B."/>
            <person name="Dobrindt U."/>
            <person name="Brzuszkiewicz E."/>
            <person name="Gottschalk G."/>
            <person name="Carniel E."/>
            <person name="Hacker J."/>
        </authorList>
    </citation>
    <scope>NUCLEOTIDE SEQUENCE [LARGE SCALE GENOMIC DNA]</scope>
    <source>
        <strain>536 / UPEC</strain>
    </source>
</reference>
<accession>Q0TEV5</accession>